<comment type="miscellaneous">
    <text evidence="1">Encoded on the antisense strand of the nuclear 35S rDNA.</text>
</comment>
<comment type="caution">
    <text evidence="2">Product of a dubious gene prediction unlikely to encode a functional protein. Because of that it is not part of the S.cerevisiae S288c complete/reference proteome set.</text>
</comment>
<organism>
    <name type="scientific">Saccharomyces cerevisiae (strain ATCC 204508 / S288c)</name>
    <name type="common">Baker's yeast</name>
    <dbReference type="NCBI Taxonomy" id="559292"/>
    <lineage>
        <taxon>Eukaryota</taxon>
        <taxon>Fungi</taxon>
        <taxon>Dikarya</taxon>
        <taxon>Ascomycota</taxon>
        <taxon>Saccharomycotina</taxon>
        <taxon>Saccharomycetes</taxon>
        <taxon>Saccharomycetales</taxon>
        <taxon>Saccharomycetaceae</taxon>
        <taxon>Saccharomyces</taxon>
    </lineage>
</organism>
<proteinExistence type="uncertain"/>
<sequence>MPPGIPRGAMCVQRFDDSRNSAIHITYRISLRSSSMREPRDPLLKVFNILKFPVTKILVFDKNLMNR</sequence>
<name>ART3_YEAST</name>
<gene>
    <name type="primary">ART3</name>
    <name type="ordered locus">YLR154W-E</name>
</gene>
<feature type="chain" id="PRO_0000262871" description="Putative uncharacterized protein ART3">
    <location>
        <begin position="1"/>
        <end position="67"/>
    </location>
</feature>
<protein>
    <recommendedName>
        <fullName>Putative uncharacterized protein ART3</fullName>
    </recommendedName>
    <alternativeName>
        <fullName>Antisense to ribosomal RNA transcript protein 3</fullName>
    </alternativeName>
</protein>
<dbReference type="EMBL" id="U53879">
    <property type="status" value="NOT_ANNOTATED_CDS"/>
    <property type="molecule type" value="Genomic_DNA"/>
</dbReference>
<dbReference type="EMBL" id="Z73326">
    <property type="status" value="NOT_ANNOTATED_CDS"/>
    <property type="molecule type" value="Genomic_DNA"/>
</dbReference>
<dbReference type="EMBL" id="AF479965">
    <property type="protein sequence ID" value="AAL79278.1"/>
    <property type="molecule type" value="Genomic_DNA"/>
</dbReference>
<dbReference type="SMR" id="Q8TGM5"/>
<dbReference type="STRING" id="4932.YLR154W-E"/>
<dbReference type="PaxDb" id="4932-YLR154W-E"/>
<dbReference type="EnsemblFungi" id="YLR154W-E_mRNA">
    <property type="protein sequence ID" value="YLR154W-E"/>
    <property type="gene ID" value="YLR154W-E"/>
</dbReference>
<dbReference type="AGR" id="SGD:S000028676"/>
<dbReference type="SGD" id="S000028676">
    <property type="gene designation" value="YLR154W-E"/>
</dbReference>
<dbReference type="eggNOG" id="ENOG502SDCQ">
    <property type="taxonomic scope" value="Eukaryota"/>
</dbReference>
<dbReference type="HOGENOM" id="CLU_200712_0_0_1"/>
<dbReference type="OMA" id="ESAICVQ"/>
<dbReference type="AntiFam" id="ANF00034">
    <property type="entry name" value="Antisense to 5.8S rRNA"/>
</dbReference>
<dbReference type="PANTHER" id="PTHR33205">
    <property type="entry name" value="TRANSMEMBRANE PROTEIN"/>
    <property type="match status" value="1"/>
</dbReference>
<dbReference type="PANTHER" id="PTHR33205:SF1">
    <property type="entry name" value="TRANSMEMBRANE PROTEIN"/>
    <property type="match status" value="1"/>
</dbReference>
<reference key="1">
    <citation type="journal article" date="1997" name="Nature">
        <title>The nucleotide sequence of Saccharomyces cerevisiae chromosome XII.</title>
        <authorList>
            <person name="Johnston M."/>
            <person name="Hillier L.W."/>
            <person name="Riles L."/>
            <person name="Albermann K."/>
            <person name="Andre B."/>
            <person name="Ansorge W."/>
            <person name="Benes V."/>
            <person name="Brueckner M."/>
            <person name="Delius H."/>
            <person name="Dubois E."/>
            <person name="Duesterhoeft A."/>
            <person name="Entian K.-D."/>
            <person name="Floeth M."/>
            <person name="Goffeau A."/>
            <person name="Hebling U."/>
            <person name="Heumann K."/>
            <person name="Heuss-Neitzel D."/>
            <person name="Hilbert H."/>
            <person name="Hilger F."/>
            <person name="Kleine K."/>
            <person name="Koetter P."/>
            <person name="Louis E.J."/>
            <person name="Messenguy F."/>
            <person name="Mewes H.-W."/>
            <person name="Miosga T."/>
            <person name="Moestl D."/>
            <person name="Mueller-Auer S."/>
            <person name="Nentwich U."/>
            <person name="Obermaier B."/>
            <person name="Piravandi E."/>
            <person name="Pohl T.M."/>
            <person name="Portetelle D."/>
            <person name="Purnelle B."/>
            <person name="Rechmann S."/>
            <person name="Rieger M."/>
            <person name="Rinke M."/>
            <person name="Rose M."/>
            <person name="Scharfe M."/>
            <person name="Scherens B."/>
            <person name="Scholler P."/>
            <person name="Schwager C."/>
            <person name="Schwarz S."/>
            <person name="Underwood A.P."/>
            <person name="Urrestarazu L.A."/>
            <person name="Vandenbol M."/>
            <person name="Verhasselt P."/>
            <person name="Vierendeels F."/>
            <person name="Voet M."/>
            <person name="Volckaert G."/>
            <person name="Voss H."/>
            <person name="Wambutt R."/>
            <person name="Wedler E."/>
            <person name="Wedler H."/>
            <person name="Zimmermann F.K."/>
            <person name="Zollner A."/>
            <person name="Hani J."/>
            <person name="Hoheisel J.D."/>
        </authorList>
    </citation>
    <scope>NUCLEOTIDE SEQUENCE [LARGE SCALE GENOMIC DNA]</scope>
    <source>
        <strain>ATCC 204508 / S288c</strain>
    </source>
</reference>
<reference key="2">
    <citation type="journal article" date="2014" name="G3 (Bethesda)">
        <title>The reference genome sequence of Saccharomyces cerevisiae: Then and now.</title>
        <authorList>
            <person name="Engel S.R."/>
            <person name="Dietrich F.S."/>
            <person name="Fisk D.G."/>
            <person name="Binkley G."/>
            <person name="Balakrishnan R."/>
            <person name="Costanzo M.C."/>
            <person name="Dwight S.S."/>
            <person name="Hitz B.C."/>
            <person name="Karra K."/>
            <person name="Nash R.S."/>
            <person name="Weng S."/>
            <person name="Wong E.D."/>
            <person name="Lloyd P."/>
            <person name="Skrzypek M.S."/>
            <person name="Miyasato S.R."/>
            <person name="Simison M."/>
            <person name="Cherry J.M."/>
        </authorList>
    </citation>
    <scope>GENOME REANNOTATION</scope>
    <source>
        <strain>ATCC 204508 / S288c</strain>
    </source>
</reference>
<reference key="3">
    <citation type="journal article" date="2002" name="Nat. Biotechnol.">
        <title>An integrated approach for finding overlooked genes in yeast.</title>
        <authorList>
            <person name="Kumar A."/>
            <person name="Harrison P.M."/>
            <person name="Cheung K.-H."/>
            <person name="Lan N."/>
            <person name="Echols N."/>
            <person name="Bertone P."/>
            <person name="Miller P."/>
            <person name="Gerstein M.B."/>
            <person name="Snyder M."/>
        </authorList>
    </citation>
    <scope>NUCLEOTIDE SEQUENCE [GENOMIC DNA]</scope>
</reference>
<evidence type="ECO:0000305" key="1"/>
<evidence type="ECO:0000305" key="2">
    <source>
    </source>
</evidence>
<accession>Q8TGM5</accession>